<feature type="chain" id="PRO_0000178774" description="Lipoprotein signal peptidase">
    <location>
        <begin position="1"/>
        <end position="165"/>
    </location>
</feature>
<feature type="transmembrane region" description="Helical" evidence="1">
    <location>
        <begin position="9"/>
        <end position="29"/>
    </location>
</feature>
<feature type="transmembrane region" description="Helical" evidence="1">
    <location>
        <begin position="69"/>
        <end position="89"/>
    </location>
</feature>
<feature type="transmembrane region" description="Helical" evidence="1">
    <location>
        <begin position="98"/>
        <end position="118"/>
    </location>
</feature>
<feature type="transmembrane region" description="Helical" evidence="1">
    <location>
        <begin position="133"/>
        <end position="153"/>
    </location>
</feature>
<feature type="active site" evidence="1">
    <location>
        <position position="124"/>
    </location>
</feature>
<feature type="active site" evidence="1">
    <location>
        <position position="142"/>
    </location>
</feature>
<comment type="function">
    <text evidence="1">This protein specifically catalyzes the removal of signal peptides from prolipoproteins.</text>
</comment>
<comment type="catalytic activity">
    <reaction evidence="1">
        <text>Release of signal peptides from bacterial membrane prolipoproteins. Hydrolyzes -Xaa-Yaa-Zaa-|-(S,diacylglyceryl)Cys-, in which Xaa is hydrophobic (preferably Leu), and Yaa (Ala or Ser) and Zaa (Gly or Ala) have small, neutral side chains.</text>
        <dbReference type="EC" id="3.4.23.36"/>
    </reaction>
</comment>
<comment type="pathway">
    <text evidence="1">Protein modification; lipoprotein biosynthesis (signal peptide cleavage).</text>
</comment>
<comment type="subcellular location">
    <subcellularLocation>
        <location evidence="1">Cell inner membrane</location>
        <topology evidence="1">Multi-pass membrane protein</topology>
    </subcellularLocation>
</comment>
<comment type="similarity">
    <text evidence="1">Belongs to the peptidase A8 family.</text>
</comment>
<accession>Q824E2</accession>
<dbReference type="EC" id="3.4.23.36" evidence="1"/>
<dbReference type="EMBL" id="AE015925">
    <property type="protein sequence ID" value="AAP04961.1"/>
    <property type="molecule type" value="Genomic_DNA"/>
</dbReference>
<dbReference type="RefSeq" id="WP_011006180.1">
    <property type="nucleotide sequence ID" value="NC_003361.3"/>
</dbReference>
<dbReference type="SMR" id="Q824E2"/>
<dbReference type="STRING" id="227941.CCA_00210"/>
<dbReference type="KEGG" id="cca:CCA_00210"/>
<dbReference type="eggNOG" id="COG0597">
    <property type="taxonomic scope" value="Bacteria"/>
</dbReference>
<dbReference type="HOGENOM" id="CLU_083252_3_0_0"/>
<dbReference type="OrthoDB" id="9810259at2"/>
<dbReference type="UniPathway" id="UPA00665"/>
<dbReference type="Proteomes" id="UP000002193">
    <property type="component" value="Chromosome"/>
</dbReference>
<dbReference type="GO" id="GO:0005886">
    <property type="term" value="C:plasma membrane"/>
    <property type="evidence" value="ECO:0007669"/>
    <property type="project" value="UniProtKB-SubCell"/>
</dbReference>
<dbReference type="GO" id="GO:0004190">
    <property type="term" value="F:aspartic-type endopeptidase activity"/>
    <property type="evidence" value="ECO:0007669"/>
    <property type="project" value="UniProtKB-UniRule"/>
</dbReference>
<dbReference type="GO" id="GO:0006508">
    <property type="term" value="P:proteolysis"/>
    <property type="evidence" value="ECO:0007669"/>
    <property type="project" value="UniProtKB-KW"/>
</dbReference>
<dbReference type="HAMAP" id="MF_00161">
    <property type="entry name" value="LspA"/>
    <property type="match status" value="1"/>
</dbReference>
<dbReference type="InterPro" id="IPR001872">
    <property type="entry name" value="Peptidase_A8"/>
</dbReference>
<dbReference type="NCBIfam" id="TIGR00077">
    <property type="entry name" value="lspA"/>
    <property type="match status" value="1"/>
</dbReference>
<dbReference type="PANTHER" id="PTHR33695">
    <property type="entry name" value="LIPOPROTEIN SIGNAL PEPTIDASE"/>
    <property type="match status" value="1"/>
</dbReference>
<dbReference type="PANTHER" id="PTHR33695:SF1">
    <property type="entry name" value="LIPOPROTEIN SIGNAL PEPTIDASE"/>
    <property type="match status" value="1"/>
</dbReference>
<dbReference type="Pfam" id="PF01252">
    <property type="entry name" value="Peptidase_A8"/>
    <property type="match status" value="1"/>
</dbReference>
<dbReference type="PRINTS" id="PR00781">
    <property type="entry name" value="LIPOSIGPTASE"/>
</dbReference>
<dbReference type="PROSITE" id="PS00855">
    <property type="entry name" value="SPASE_II"/>
    <property type="match status" value="1"/>
</dbReference>
<name>LSPA_CHLCV</name>
<evidence type="ECO:0000255" key="1">
    <source>
        <dbReference type="HAMAP-Rule" id="MF_00161"/>
    </source>
</evidence>
<reference key="1">
    <citation type="journal article" date="2003" name="Nucleic Acids Res.">
        <title>Genome sequence of Chlamydophila caviae (Chlamydia psittaci GPIC): examining the role of niche-specific genes in the evolution of the Chlamydiaceae.</title>
        <authorList>
            <person name="Read T.D."/>
            <person name="Myers G.S.A."/>
            <person name="Brunham R.C."/>
            <person name="Nelson W.C."/>
            <person name="Paulsen I.T."/>
            <person name="Heidelberg J.F."/>
            <person name="Holtzapple E.K."/>
            <person name="Khouri H.M."/>
            <person name="Federova N.B."/>
            <person name="Carty H.A."/>
            <person name="Umayam L.A."/>
            <person name="Haft D.H."/>
            <person name="Peterson J.D."/>
            <person name="Beanan M.J."/>
            <person name="White O."/>
            <person name="Salzberg S.L."/>
            <person name="Hsia R.-C."/>
            <person name="McClarty G."/>
            <person name="Rank R.G."/>
            <person name="Bavoil P.M."/>
            <person name="Fraser C.M."/>
        </authorList>
    </citation>
    <scope>NUCLEOTIDE SEQUENCE [LARGE SCALE GENOMIC DNA]</scope>
    <source>
        <strain>ATCC VR-813 / DSM 19441 / 03DC25 / GPIC</strain>
    </source>
</reference>
<gene>
    <name evidence="1" type="primary">lspA</name>
    <name type="ordered locus">CCA_00210</name>
</gene>
<protein>
    <recommendedName>
        <fullName evidence="1">Lipoprotein signal peptidase</fullName>
        <ecNumber evidence="1">3.4.23.36</ecNumber>
    </recommendedName>
    <alternativeName>
        <fullName evidence="1">Prolipoprotein signal peptidase</fullName>
    </alternativeName>
    <alternativeName>
        <fullName evidence="1">Signal peptidase II</fullName>
        <shortName evidence="1">SPase II</shortName>
    </alternativeName>
</protein>
<organism>
    <name type="scientific">Chlamydia caviae (strain ATCC VR-813 / DSM 19441 / 03DC25 / GPIC)</name>
    <name type="common">Chlamydophila caviae</name>
    <dbReference type="NCBI Taxonomy" id="227941"/>
    <lineage>
        <taxon>Bacteria</taxon>
        <taxon>Pseudomonadati</taxon>
        <taxon>Chlamydiota</taxon>
        <taxon>Chlamydiia</taxon>
        <taxon>Chlamydiales</taxon>
        <taxon>Chlamydiaceae</taxon>
        <taxon>Chlamydia/Chlamydophila group</taxon>
        <taxon>Chlamydia</taxon>
    </lineage>
</organism>
<sequence>MSSRSRSTFLAISFFVLIDWVSKLAVLLYRGNLPDARPILYQYSWGKLIFCICPTFNEGAAFGIFSKYKYFLFAIRIAIILGILAFLFLRKKRTSPSIRFSLILLCSGAIGNVGDILFYRHVVDFISIGFKRWYFPTFNFADIFISLGTFIFVYKLYFPTKQKIK</sequence>
<proteinExistence type="inferred from homology"/>
<keyword id="KW-0064">Aspartyl protease</keyword>
<keyword id="KW-0997">Cell inner membrane</keyword>
<keyword id="KW-1003">Cell membrane</keyword>
<keyword id="KW-0378">Hydrolase</keyword>
<keyword id="KW-0472">Membrane</keyword>
<keyword id="KW-0645">Protease</keyword>
<keyword id="KW-0812">Transmembrane</keyword>
<keyword id="KW-1133">Transmembrane helix</keyword>